<keyword id="KW-0227">DNA damage</keyword>
<keyword id="KW-0234">DNA repair</keyword>
<keyword id="KW-0235">DNA replication</keyword>
<keyword id="KW-0436">Ligase</keyword>
<keyword id="KW-0460">Magnesium</keyword>
<keyword id="KW-0464">Manganese</keyword>
<keyword id="KW-0479">Metal-binding</keyword>
<keyword id="KW-0520">NAD</keyword>
<keyword id="KW-0862">Zinc</keyword>
<accession>C1DN27</accession>
<comment type="function">
    <text evidence="1">DNA ligase that catalyzes the formation of phosphodiester linkages between 5'-phosphoryl and 3'-hydroxyl groups in double-stranded DNA using NAD as a coenzyme and as the energy source for the reaction. It is essential for DNA replication and repair of damaged DNA.</text>
</comment>
<comment type="catalytic activity">
    <reaction evidence="1">
        <text>NAD(+) + (deoxyribonucleotide)n-3'-hydroxyl + 5'-phospho-(deoxyribonucleotide)m = (deoxyribonucleotide)n+m + AMP + beta-nicotinamide D-nucleotide.</text>
        <dbReference type="EC" id="6.5.1.2"/>
    </reaction>
</comment>
<comment type="cofactor">
    <cofactor evidence="1">
        <name>Mg(2+)</name>
        <dbReference type="ChEBI" id="CHEBI:18420"/>
    </cofactor>
    <cofactor evidence="1">
        <name>Mn(2+)</name>
        <dbReference type="ChEBI" id="CHEBI:29035"/>
    </cofactor>
</comment>
<comment type="similarity">
    <text evidence="1">Belongs to the NAD-dependent DNA ligase family. LigA subfamily.</text>
</comment>
<gene>
    <name evidence="1" type="primary">ligA</name>
    <name type="ordered locus">Avin_30290</name>
</gene>
<organism>
    <name type="scientific">Azotobacter vinelandii (strain DJ / ATCC BAA-1303)</name>
    <dbReference type="NCBI Taxonomy" id="322710"/>
    <lineage>
        <taxon>Bacteria</taxon>
        <taxon>Pseudomonadati</taxon>
        <taxon>Pseudomonadota</taxon>
        <taxon>Gammaproteobacteria</taxon>
        <taxon>Pseudomonadales</taxon>
        <taxon>Pseudomonadaceae</taxon>
        <taxon>Azotobacter</taxon>
    </lineage>
</organism>
<dbReference type="EC" id="6.5.1.2" evidence="1"/>
<dbReference type="EMBL" id="CP001157">
    <property type="protein sequence ID" value="ACO79194.1"/>
    <property type="molecule type" value="Genomic_DNA"/>
</dbReference>
<dbReference type="RefSeq" id="WP_012701580.1">
    <property type="nucleotide sequence ID" value="NC_012560.1"/>
</dbReference>
<dbReference type="SMR" id="C1DN27"/>
<dbReference type="STRING" id="322710.Avin_30290"/>
<dbReference type="EnsemblBacteria" id="ACO79194">
    <property type="protein sequence ID" value="ACO79194"/>
    <property type="gene ID" value="Avin_30290"/>
</dbReference>
<dbReference type="GeneID" id="88186121"/>
<dbReference type="KEGG" id="avn:Avin_30290"/>
<dbReference type="eggNOG" id="COG0272">
    <property type="taxonomic scope" value="Bacteria"/>
</dbReference>
<dbReference type="HOGENOM" id="CLU_007764_2_1_6"/>
<dbReference type="OrthoDB" id="9759736at2"/>
<dbReference type="Proteomes" id="UP000002424">
    <property type="component" value="Chromosome"/>
</dbReference>
<dbReference type="GO" id="GO:0005829">
    <property type="term" value="C:cytosol"/>
    <property type="evidence" value="ECO:0007669"/>
    <property type="project" value="TreeGrafter"/>
</dbReference>
<dbReference type="GO" id="GO:0003677">
    <property type="term" value="F:DNA binding"/>
    <property type="evidence" value="ECO:0007669"/>
    <property type="project" value="InterPro"/>
</dbReference>
<dbReference type="GO" id="GO:0003911">
    <property type="term" value="F:DNA ligase (NAD+) activity"/>
    <property type="evidence" value="ECO:0007669"/>
    <property type="project" value="UniProtKB-UniRule"/>
</dbReference>
<dbReference type="GO" id="GO:0046872">
    <property type="term" value="F:metal ion binding"/>
    <property type="evidence" value="ECO:0007669"/>
    <property type="project" value="UniProtKB-KW"/>
</dbReference>
<dbReference type="GO" id="GO:0006281">
    <property type="term" value="P:DNA repair"/>
    <property type="evidence" value="ECO:0007669"/>
    <property type="project" value="UniProtKB-KW"/>
</dbReference>
<dbReference type="GO" id="GO:0006260">
    <property type="term" value="P:DNA replication"/>
    <property type="evidence" value="ECO:0007669"/>
    <property type="project" value="UniProtKB-KW"/>
</dbReference>
<dbReference type="CDD" id="cd17748">
    <property type="entry name" value="BRCT_DNA_ligase_like"/>
    <property type="match status" value="1"/>
</dbReference>
<dbReference type="CDD" id="cd00114">
    <property type="entry name" value="LIGANc"/>
    <property type="match status" value="1"/>
</dbReference>
<dbReference type="FunFam" id="1.10.150.20:FF:000006">
    <property type="entry name" value="DNA ligase"/>
    <property type="match status" value="1"/>
</dbReference>
<dbReference type="FunFam" id="1.10.150.20:FF:000007">
    <property type="entry name" value="DNA ligase"/>
    <property type="match status" value="1"/>
</dbReference>
<dbReference type="FunFam" id="1.10.287.610:FF:000002">
    <property type="entry name" value="DNA ligase"/>
    <property type="match status" value="1"/>
</dbReference>
<dbReference type="FunFam" id="2.40.50.140:FF:000012">
    <property type="entry name" value="DNA ligase"/>
    <property type="match status" value="1"/>
</dbReference>
<dbReference type="FunFam" id="3.30.470.30:FF:000001">
    <property type="entry name" value="DNA ligase"/>
    <property type="match status" value="1"/>
</dbReference>
<dbReference type="Gene3D" id="6.20.10.30">
    <property type="match status" value="1"/>
</dbReference>
<dbReference type="Gene3D" id="1.10.150.20">
    <property type="entry name" value="5' to 3' exonuclease, C-terminal subdomain"/>
    <property type="match status" value="3"/>
</dbReference>
<dbReference type="Gene3D" id="3.40.50.10190">
    <property type="entry name" value="BRCT domain"/>
    <property type="match status" value="1"/>
</dbReference>
<dbReference type="Gene3D" id="3.30.470.30">
    <property type="entry name" value="DNA ligase/mRNA capping enzyme"/>
    <property type="match status" value="1"/>
</dbReference>
<dbReference type="Gene3D" id="1.10.287.610">
    <property type="entry name" value="Helix hairpin bin"/>
    <property type="match status" value="1"/>
</dbReference>
<dbReference type="Gene3D" id="2.40.50.140">
    <property type="entry name" value="Nucleic acid-binding proteins"/>
    <property type="match status" value="1"/>
</dbReference>
<dbReference type="HAMAP" id="MF_01588">
    <property type="entry name" value="DNA_ligase_A"/>
    <property type="match status" value="1"/>
</dbReference>
<dbReference type="InterPro" id="IPR001357">
    <property type="entry name" value="BRCT_dom"/>
</dbReference>
<dbReference type="InterPro" id="IPR036420">
    <property type="entry name" value="BRCT_dom_sf"/>
</dbReference>
<dbReference type="InterPro" id="IPR041663">
    <property type="entry name" value="DisA/LigA_HHH"/>
</dbReference>
<dbReference type="InterPro" id="IPR001679">
    <property type="entry name" value="DNA_ligase"/>
</dbReference>
<dbReference type="InterPro" id="IPR018239">
    <property type="entry name" value="DNA_ligase_AS"/>
</dbReference>
<dbReference type="InterPro" id="IPR033136">
    <property type="entry name" value="DNA_ligase_CS"/>
</dbReference>
<dbReference type="InterPro" id="IPR013839">
    <property type="entry name" value="DNAligase_adenylation"/>
</dbReference>
<dbReference type="InterPro" id="IPR013840">
    <property type="entry name" value="DNAligase_N"/>
</dbReference>
<dbReference type="InterPro" id="IPR003583">
    <property type="entry name" value="Hlx-hairpin-Hlx_DNA-bd_motif"/>
</dbReference>
<dbReference type="InterPro" id="IPR012340">
    <property type="entry name" value="NA-bd_OB-fold"/>
</dbReference>
<dbReference type="InterPro" id="IPR004150">
    <property type="entry name" value="NAD_DNA_ligase_OB"/>
</dbReference>
<dbReference type="InterPro" id="IPR010994">
    <property type="entry name" value="RuvA_2-like"/>
</dbReference>
<dbReference type="NCBIfam" id="TIGR00575">
    <property type="entry name" value="dnlj"/>
    <property type="match status" value="1"/>
</dbReference>
<dbReference type="NCBIfam" id="NF005932">
    <property type="entry name" value="PRK07956.1"/>
    <property type="match status" value="1"/>
</dbReference>
<dbReference type="PANTHER" id="PTHR23389">
    <property type="entry name" value="CHROMOSOME TRANSMISSION FIDELITY FACTOR 18"/>
    <property type="match status" value="1"/>
</dbReference>
<dbReference type="PANTHER" id="PTHR23389:SF9">
    <property type="entry name" value="DNA LIGASE"/>
    <property type="match status" value="1"/>
</dbReference>
<dbReference type="Pfam" id="PF00533">
    <property type="entry name" value="BRCT"/>
    <property type="match status" value="1"/>
</dbReference>
<dbReference type="Pfam" id="PF01653">
    <property type="entry name" value="DNA_ligase_aden"/>
    <property type="match status" value="1"/>
</dbReference>
<dbReference type="Pfam" id="PF03120">
    <property type="entry name" value="DNA_ligase_OB"/>
    <property type="match status" value="1"/>
</dbReference>
<dbReference type="Pfam" id="PF12826">
    <property type="entry name" value="HHH_2"/>
    <property type="match status" value="1"/>
</dbReference>
<dbReference type="Pfam" id="PF22745">
    <property type="entry name" value="Nlig-Ia"/>
    <property type="match status" value="1"/>
</dbReference>
<dbReference type="PIRSF" id="PIRSF001604">
    <property type="entry name" value="LigA"/>
    <property type="match status" value="1"/>
</dbReference>
<dbReference type="SMART" id="SM00292">
    <property type="entry name" value="BRCT"/>
    <property type="match status" value="1"/>
</dbReference>
<dbReference type="SMART" id="SM00278">
    <property type="entry name" value="HhH1"/>
    <property type="match status" value="3"/>
</dbReference>
<dbReference type="SMART" id="SM00532">
    <property type="entry name" value="LIGANc"/>
    <property type="match status" value="1"/>
</dbReference>
<dbReference type="SUPFAM" id="SSF52113">
    <property type="entry name" value="BRCT domain"/>
    <property type="match status" value="1"/>
</dbReference>
<dbReference type="SUPFAM" id="SSF56091">
    <property type="entry name" value="DNA ligase/mRNA capping enzyme, catalytic domain"/>
    <property type="match status" value="1"/>
</dbReference>
<dbReference type="SUPFAM" id="SSF50249">
    <property type="entry name" value="Nucleic acid-binding proteins"/>
    <property type="match status" value="1"/>
</dbReference>
<dbReference type="SUPFAM" id="SSF47781">
    <property type="entry name" value="RuvA domain 2-like"/>
    <property type="match status" value="2"/>
</dbReference>
<dbReference type="PROSITE" id="PS50172">
    <property type="entry name" value="BRCT"/>
    <property type="match status" value="1"/>
</dbReference>
<dbReference type="PROSITE" id="PS01055">
    <property type="entry name" value="DNA_LIGASE_N1"/>
    <property type="match status" value="1"/>
</dbReference>
<dbReference type="PROSITE" id="PS01056">
    <property type="entry name" value="DNA_LIGASE_N2"/>
    <property type="match status" value="1"/>
</dbReference>
<sequence>MTDAQTAAERIARLRSEIDEHNYRYYVLDAPSVPDAEYDRLFNELKALEAEHPELVTPESPTQRVGGEALAAFGQVRHELPMLSLGNAFAEEDLLDFDRNVCKGLDRGIEVVEYSCEPKLDGLAVSLLYEDGQLVRGATRGDGSTGEDITANVRTVRNIPLRLHGQGWPAVLEVRGEIYMPRAGFEALNARAIENGGKTFANPRNAAAGSLRQLDPKITAGRPLEFCGYGIGRFEGAEVPQTHTSLLETLRRWGLPISRELQLARSVQDCLAYYRAIGERRQGLAYDIDGVVFKVNRLDWQRELGFRARTPHWAIAYKFPAQEELTELLGVEFQVGRTGAITPVARLKPVQVAGVTVSNASLHNMDEVARLGVMIGDTVIVRRAGDVIPQIMQVVGERRPADARPVEVPRQCPVCGSAVERTQLVKRGKGRASLSEGAIYRCVGRLACQAQLKQAIVHFVSRRAMDIDGLGERIVEQLVDTGLVKSPADLYILTFEQLVVLDGFAEVSSNNLLAAIAASRRPSLARFIYALGIPDVGEETAKRLARALGSLTRIEKALPEVLIWLPDVGLEVAHEIHSFFRDEHNLTVIGQLLARGVELQEEGELHAEFAACASLGELLDKLDIPGIAATGAKKLAEAAGSLEAVIGLSQDWLTLNTTKGLSEKARQALREFFAVPANVEHARAIEGQLREFGMHWESERRCAEGLPLAGQTWVLTGTLESMSREQGKARLESLGAKVAGSVSAKTACVVAGPGAGSKLAKAGELGVKVLDEEAFLALLRQLES</sequence>
<evidence type="ECO:0000255" key="1">
    <source>
        <dbReference type="HAMAP-Rule" id="MF_01588"/>
    </source>
</evidence>
<reference key="1">
    <citation type="journal article" date="2009" name="J. Bacteriol.">
        <title>Genome sequence of Azotobacter vinelandii, an obligate aerobe specialized to support diverse anaerobic metabolic processes.</title>
        <authorList>
            <person name="Setubal J.C."/>
            <person name="Dos Santos P."/>
            <person name="Goldman B.S."/>
            <person name="Ertesvaag H."/>
            <person name="Espin G."/>
            <person name="Rubio L.M."/>
            <person name="Valla S."/>
            <person name="Almeida N.F."/>
            <person name="Balasubramanian D."/>
            <person name="Cromes L."/>
            <person name="Curatti L."/>
            <person name="Du Z."/>
            <person name="Godsy E."/>
            <person name="Goodner B."/>
            <person name="Hellner-Burris K."/>
            <person name="Hernandez J.A."/>
            <person name="Houmiel K."/>
            <person name="Imperial J."/>
            <person name="Kennedy C."/>
            <person name="Larson T.J."/>
            <person name="Latreille P."/>
            <person name="Ligon L.S."/>
            <person name="Lu J."/>
            <person name="Maerk M."/>
            <person name="Miller N.M."/>
            <person name="Norton S."/>
            <person name="O'Carroll I.P."/>
            <person name="Paulsen I."/>
            <person name="Raulfs E.C."/>
            <person name="Roemer R."/>
            <person name="Rosser J."/>
            <person name="Segura D."/>
            <person name="Slater S."/>
            <person name="Stricklin S.L."/>
            <person name="Studholme D.J."/>
            <person name="Sun J."/>
            <person name="Viana C.J."/>
            <person name="Wallin E."/>
            <person name="Wang B."/>
            <person name="Wheeler C."/>
            <person name="Zhu H."/>
            <person name="Dean D.R."/>
            <person name="Dixon R."/>
            <person name="Wood D."/>
        </authorList>
    </citation>
    <scope>NUCLEOTIDE SEQUENCE [LARGE SCALE GENOMIC DNA]</scope>
    <source>
        <strain>DJ / ATCC BAA-1303</strain>
    </source>
</reference>
<feature type="chain" id="PRO_0000380296" description="DNA ligase">
    <location>
        <begin position="1"/>
        <end position="784"/>
    </location>
</feature>
<feature type="domain" description="BRCT" evidence="1">
    <location>
        <begin position="703"/>
        <end position="784"/>
    </location>
</feature>
<feature type="active site" description="N6-AMP-lysine intermediate" evidence="1">
    <location>
        <position position="119"/>
    </location>
</feature>
<feature type="binding site" evidence="1">
    <location>
        <begin position="35"/>
        <end position="39"/>
    </location>
    <ligand>
        <name>NAD(+)</name>
        <dbReference type="ChEBI" id="CHEBI:57540"/>
    </ligand>
</feature>
<feature type="binding site" evidence="1">
    <location>
        <begin position="84"/>
        <end position="85"/>
    </location>
    <ligand>
        <name>NAD(+)</name>
        <dbReference type="ChEBI" id="CHEBI:57540"/>
    </ligand>
</feature>
<feature type="binding site" evidence="1">
    <location>
        <position position="117"/>
    </location>
    <ligand>
        <name>NAD(+)</name>
        <dbReference type="ChEBI" id="CHEBI:57540"/>
    </ligand>
</feature>
<feature type="binding site" evidence="1">
    <location>
        <position position="140"/>
    </location>
    <ligand>
        <name>NAD(+)</name>
        <dbReference type="ChEBI" id="CHEBI:57540"/>
    </ligand>
</feature>
<feature type="binding site" evidence="1">
    <location>
        <position position="177"/>
    </location>
    <ligand>
        <name>NAD(+)</name>
        <dbReference type="ChEBI" id="CHEBI:57540"/>
    </ligand>
</feature>
<feature type="binding site" evidence="1">
    <location>
        <position position="294"/>
    </location>
    <ligand>
        <name>NAD(+)</name>
        <dbReference type="ChEBI" id="CHEBI:57540"/>
    </ligand>
</feature>
<feature type="binding site" evidence="1">
    <location>
        <position position="318"/>
    </location>
    <ligand>
        <name>NAD(+)</name>
        <dbReference type="ChEBI" id="CHEBI:57540"/>
    </ligand>
</feature>
<feature type="binding site" evidence="1">
    <location>
        <position position="412"/>
    </location>
    <ligand>
        <name>Zn(2+)</name>
        <dbReference type="ChEBI" id="CHEBI:29105"/>
    </ligand>
</feature>
<feature type="binding site" evidence="1">
    <location>
        <position position="415"/>
    </location>
    <ligand>
        <name>Zn(2+)</name>
        <dbReference type="ChEBI" id="CHEBI:29105"/>
    </ligand>
</feature>
<feature type="binding site" evidence="1">
    <location>
        <position position="442"/>
    </location>
    <ligand>
        <name>Zn(2+)</name>
        <dbReference type="ChEBI" id="CHEBI:29105"/>
    </ligand>
</feature>
<feature type="binding site" evidence="1">
    <location>
        <position position="448"/>
    </location>
    <ligand>
        <name>Zn(2+)</name>
        <dbReference type="ChEBI" id="CHEBI:29105"/>
    </ligand>
</feature>
<protein>
    <recommendedName>
        <fullName evidence="1">DNA ligase</fullName>
        <ecNumber evidence="1">6.5.1.2</ecNumber>
    </recommendedName>
    <alternativeName>
        <fullName evidence="1">Polydeoxyribonucleotide synthase [NAD(+)]</fullName>
    </alternativeName>
</protein>
<name>DNLJ_AZOVD</name>
<proteinExistence type="inferred from homology"/>